<evidence type="ECO:0000255" key="1">
    <source>
        <dbReference type="HAMAP-Rule" id="MF_00580"/>
    </source>
</evidence>
<evidence type="ECO:0000305" key="2"/>
<name>CH10_HELPJ</name>
<accession>P0A0R4</accession>
<accession>P48225</accession>
<proteinExistence type="inferred from homology"/>
<organism>
    <name type="scientific">Helicobacter pylori (strain J99 / ATCC 700824)</name>
    <name type="common">Campylobacter pylori J99</name>
    <dbReference type="NCBI Taxonomy" id="85963"/>
    <lineage>
        <taxon>Bacteria</taxon>
        <taxon>Pseudomonadati</taxon>
        <taxon>Campylobacterota</taxon>
        <taxon>Epsilonproteobacteria</taxon>
        <taxon>Campylobacterales</taxon>
        <taxon>Helicobacteraceae</taxon>
        <taxon>Helicobacter</taxon>
    </lineage>
</organism>
<comment type="function">
    <text evidence="1">Together with the chaperonin GroEL, plays an essential role in assisting protein folding. The GroEL-GroES system forms a nano-cage that allows encapsulation of the non-native substrate proteins and provides a physical environment optimized to promote and accelerate protein folding. GroES binds to the apical surface of the GroEL ring, thereby capping the opening of the GroEL channel.</text>
</comment>
<comment type="subunit">
    <text evidence="1">Heptamer of 7 subunits arranged in a ring. Interacts with the chaperonin GroEL.</text>
</comment>
<comment type="subcellular location">
    <subcellularLocation>
        <location evidence="1">Cytoplasm</location>
    </subcellularLocation>
</comment>
<comment type="similarity">
    <text evidence="1 2">Belongs to the GroES chaperonin family.</text>
</comment>
<sequence>MKFQPLGERVLVERLEEENKTSSGIIIPDNAKEKPLMGVVKAVSHKISEGCKCVKEGDVIAFGKYKGAEIVLDGTEYMVLELEDILGIVGSGSCCHTGNHDHKHAKEHEACCHDHKKH</sequence>
<gene>
    <name evidence="1" type="primary">groES</name>
    <name evidence="1" type="synonym">groS</name>
    <name type="synonym">hsp10</name>
    <name type="synonym">hspA</name>
    <name type="synonym">mopB</name>
    <name type="ordered locus">jhp_0009</name>
</gene>
<feature type="chain" id="PRO_0000174765" description="Co-chaperonin GroES">
    <location>
        <begin position="1"/>
        <end position="118"/>
    </location>
</feature>
<dbReference type="EMBL" id="AE001439">
    <property type="protein sequence ID" value="AAD05584.1"/>
    <property type="molecule type" value="Genomic_DNA"/>
</dbReference>
<dbReference type="PIR" id="C71986">
    <property type="entry name" value="C71986"/>
</dbReference>
<dbReference type="RefSeq" id="WP_000671934.1">
    <property type="nucleotide sequence ID" value="NZ_CP011330.1"/>
</dbReference>
<dbReference type="SMR" id="P0A0R4"/>
<dbReference type="KEGG" id="hpj:jhp_0009"/>
<dbReference type="PATRIC" id="fig|85963.30.peg.1034"/>
<dbReference type="eggNOG" id="COG0234">
    <property type="taxonomic scope" value="Bacteria"/>
</dbReference>
<dbReference type="Proteomes" id="UP000000804">
    <property type="component" value="Chromosome"/>
</dbReference>
<dbReference type="GO" id="GO:0005737">
    <property type="term" value="C:cytoplasm"/>
    <property type="evidence" value="ECO:0007669"/>
    <property type="project" value="UniProtKB-SubCell"/>
</dbReference>
<dbReference type="GO" id="GO:0005524">
    <property type="term" value="F:ATP binding"/>
    <property type="evidence" value="ECO:0007669"/>
    <property type="project" value="InterPro"/>
</dbReference>
<dbReference type="GO" id="GO:0046872">
    <property type="term" value="F:metal ion binding"/>
    <property type="evidence" value="ECO:0007669"/>
    <property type="project" value="TreeGrafter"/>
</dbReference>
<dbReference type="GO" id="GO:0044183">
    <property type="term" value="F:protein folding chaperone"/>
    <property type="evidence" value="ECO:0007669"/>
    <property type="project" value="InterPro"/>
</dbReference>
<dbReference type="GO" id="GO:0051087">
    <property type="term" value="F:protein-folding chaperone binding"/>
    <property type="evidence" value="ECO:0007669"/>
    <property type="project" value="TreeGrafter"/>
</dbReference>
<dbReference type="GO" id="GO:0051082">
    <property type="term" value="F:unfolded protein binding"/>
    <property type="evidence" value="ECO:0007669"/>
    <property type="project" value="TreeGrafter"/>
</dbReference>
<dbReference type="GO" id="GO:0051085">
    <property type="term" value="P:chaperone cofactor-dependent protein refolding"/>
    <property type="evidence" value="ECO:0007669"/>
    <property type="project" value="TreeGrafter"/>
</dbReference>
<dbReference type="CDD" id="cd00320">
    <property type="entry name" value="cpn10"/>
    <property type="match status" value="1"/>
</dbReference>
<dbReference type="FunFam" id="2.30.33.40:FF:000009">
    <property type="entry name" value="10 kDa chaperonin"/>
    <property type="match status" value="1"/>
</dbReference>
<dbReference type="Gene3D" id="2.30.33.40">
    <property type="entry name" value="GroES chaperonin"/>
    <property type="match status" value="1"/>
</dbReference>
<dbReference type="HAMAP" id="MF_00580">
    <property type="entry name" value="CH10"/>
    <property type="match status" value="1"/>
</dbReference>
<dbReference type="InterPro" id="IPR020818">
    <property type="entry name" value="Chaperonin_GroES"/>
</dbReference>
<dbReference type="InterPro" id="IPR037124">
    <property type="entry name" value="Chaperonin_GroES_sf"/>
</dbReference>
<dbReference type="InterPro" id="IPR018369">
    <property type="entry name" value="Chaprnonin_Cpn10_CS"/>
</dbReference>
<dbReference type="InterPro" id="IPR011032">
    <property type="entry name" value="GroES-like_sf"/>
</dbReference>
<dbReference type="NCBIfam" id="NF001535">
    <property type="entry name" value="PRK00364.3-1"/>
    <property type="match status" value="1"/>
</dbReference>
<dbReference type="NCBIfam" id="NF001537">
    <property type="entry name" value="PRK00364.3-3"/>
    <property type="match status" value="1"/>
</dbReference>
<dbReference type="PANTHER" id="PTHR10772">
    <property type="entry name" value="10 KDA HEAT SHOCK PROTEIN"/>
    <property type="match status" value="1"/>
</dbReference>
<dbReference type="PANTHER" id="PTHR10772:SF58">
    <property type="entry name" value="CO-CHAPERONIN GROES"/>
    <property type="match status" value="1"/>
</dbReference>
<dbReference type="Pfam" id="PF00166">
    <property type="entry name" value="Cpn10"/>
    <property type="match status" value="1"/>
</dbReference>
<dbReference type="PRINTS" id="PR00297">
    <property type="entry name" value="CHAPERONIN10"/>
</dbReference>
<dbReference type="SMART" id="SM00883">
    <property type="entry name" value="Cpn10"/>
    <property type="match status" value="1"/>
</dbReference>
<dbReference type="SUPFAM" id="SSF50129">
    <property type="entry name" value="GroES-like"/>
    <property type="match status" value="1"/>
</dbReference>
<dbReference type="PROSITE" id="PS00681">
    <property type="entry name" value="CHAPERONINS_CPN10"/>
    <property type="match status" value="1"/>
</dbReference>
<keyword id="KW-0143">Chaperone</keyword>
<keyword id="KW-0963">Cytoplasm</keyword>
<keyword id="KW-0346">Stress response</keyword>
<reference key="1">
    <citation type="journal article" date="1999" name="Nature">
        <title>Genomic sequence comparison of two unrelated isolates of the human gastric pathogen Helicobacter pylori.</title>
        <authorList>
            <person name="Alm R.A."/>
            <person name="Ling L.-S.L."/>
            <person name="Moir D.T."/>
            <person name="King B.L."/>
            <person name="Brown E.D."/>
            <person name="Doig P.C."/>
            <person name="Smith D.R."/>
            <person name="Noonan B."/>
            <person name="Guild B.C."/>
            <person name="deJonge B.L."/>
            <person name="Carmel G."/>
            <person name="Tummino P.J."/>
            <person name="Caruso A."/>
            <person name="Uria-Nickelsen M."/>
            <person name="Mills D.M."/>
            <person name="Ives C."/>
            <person name="Gibson R."/>
            <person name="Merberg D."/>
            <person name="Mills S.D."/>
            <person name="Jiang Q."/>
            <person name="Taylor D.E."/>
            <person name="Vovis G.F."/>
            <person name="Trust T.J."/>
        </authorList>
    </citation>
    <scope>NUCLEOTIDE SEQUENCE [LARGE SCALE GENOMIC DNA]</scope>
    <source>
        <strain>J99 / ATCC 700824</strain>
    </source>
</reference>
<protein>
    <recommendedName>
        <fullName evidence="1">Co-chaperonin GroES</fullName>
    </recommendedName>
    <alternativeName>
        <fullName evidence="1">10 kDa chaperonin</fullName>
    </alternativeName>
    <alternativeName>
        <fullName evidence="1">Chaperonin-10</fullName>
        <shortName evidence="1">Cpn10</shortName>
    </alternativeName>
</protein>